<comment type="function">
    <text evidence="1">Peptide chain release factor 1 directs the termination of translation in response to the peptide chain termination codons UAG and UAA.</text>
</comment>
<comment type="subcellular location">
    <subcellularLocation>
        <location evidence="1">Cytoplasm</location>
    </subcellularLocation>
</comment>
<comment type="PTM">
    <text evidence="1">Methylated by PrmC. Methylation increases the termination efficiency of RF1.</text>
</comment>
<comment type="similarity">
    <text evidence="1">Belongs to the prokaryotic/mitochondrial release factor family.</text>
</comment>
<accession>A8FNS3</accession>
<feature type="chain" id="PRO_1000071262" description="Peptide chain release factor 1">
    <location>
        <begin position="1"/>
        <end position="355"/>
    </location>
</feature>
<feature type="region of interest" description="Disordered" evidence="2">
    <location>
        <begin position="280"/>
        <end position="303"/>
    </location>
</feature>
<feature type="compositionally biased region" description="Basic and acidic residues" evidence="2">
    <location>
        <begin position="280"/>
        <end position="291"/>
    </location>
</feature>
<feature type="modified residue" description="N5-methylglutamine" evidence="1">
    <location>
        <position position="231"/>
    </location>
</feature>
<name>RF1_CAMJ8</name>
<protein>
    <recommendedName>
        <fullName evidence="1">Peptide chain release factor 1</fullName>
        <shortName evidence="1">RF-1</shortName>
    </recommendedName>
</protein>
<organism>
    <name type="scientific">Campylobacter jejuni subsp. jejuni serotype O:6 (strain 81116 / NCTC 11828)</name>
    <dbReference type="NCBI Taxonomy" id="407148"/>
    <lineage>
        <taxon>Bacteria</taxon>
        <taxon>Pseudomonadati</taxon>
        <taxon>Campylobacterota</taxon>
        <taxon>Epsilonproteobacteria</taxon>
        <taxon>Campylobacterales</taxon>
        <taxon>Campylobacteraceae</taxon>
        <taxon>Campylobacter</taxon>
    </lineage>
</organism>
<evidence type="ECO:0000255" key="1">
    <source>
        <dbReference type="HAMAP-Rule" id="MF_00093"/>
    </source>
</evidence>
<evidence type="ECO:0000256" key="2">
    <source>
        <dbReference type="SAM" id="MobiDB-lite"/>
    </source>
</evidence>
<sequence length="355" mass="39909">MLASKLDPFLKRFEELNSLLSSSDILNDISKMTTLSKEQKNLEPIVLKAKEYLKTLDNIEENKALLNDPELGELAKEELKTLEELKPKLEEEIKILLLPKDPNDERNIFLEIRAGTGGDEASLFVGDLVKAYARYAENRGYKLEIVSSSEGSVGGFKEIIMLVKGTGAYSRLKYEGGTHRVQRVPQTESQGRVHTSAITVAVMPEVDDIEIEINPNDLKVDVMRSSGHGGQSVNTTDSAVRITHIPTGIVVVNQDGKSQHKNKESAMKVLKARLYEMQESERLAKESEARKSQVGSGDRSERIRTYNFPQNRISDHRINLTLYRLDAIMQDGLFDEIIEPLITHHQAQALQEQNL</sequence>
<proteinExistence type="inferred from homology"/>
<reference key="1">
    <citation type="journal article" date="2007" name="J. Bacteriol.">
        <title>The complete genome sequence of Campylobacter jejuni strain 81116 (NCTC11828).</title>
        <authorList>
            <person name="Pearson B.M."/>
            <person name="Gaskin D.J.H."/>
            <person name="Segers R.P.A.M."/>
            <person name="Wells J.M."/>
            <person name="Nuijten P.J.M."/>
            <person name="van Vliet A.H.M."/>
        </authorList>
    </citation>
    <scope>NUCLEOTIDE SEQUENCE [LARGE SCALE GENOMIC DNA]</scope>
    <source>
        <strain>81116 / NCTC 11828</strain>
    </source>
</reference>
<gene>
    <name evidence="1" type="primary">prfA</name>
    <name type="ordered locus">C8J_1513</name>
</gene>
<keyword id="KW-0963">Cytoplasm</keyword>
<keyword id="KW-0488">Methylation</keyword>
<keyword id="KW-0648">Protein biosynthesis</keyword>
<dbReference type="EMBL" id="CP000814">
    <property type="protein sequence ID" value="ABV53110.1"/>
    <property type="molecule type" value="Genomic_DNA"/>
</dbReference>
<dbReference type="RefSeq" id="WP_002858952.1">
    <property type="nucleotide sequence ID" value="NC_009839.1"/>
</dbReference>
<dbReference type="SMR" id="A8FNS3"/>
<dbReference type="KEGG" id="cju:C8J_1513"/>
<dbReference type="HOGENOM" id="CLU_036856_0_1_7"/>
<dbReference type="GO" id="GO:0005737">
    <property type="term" value="C:cytoplasm"/>
    <property type="evidence" value="ECO:0007669"/>
    <property type="project" value="UniProtKB-SubCell"/>
</dbReference>
<dbReference type="GO" id="GO:0016149">
    <property type="term" value="F:translation release factor activity, codon specific"/>
    <property type="evidence" value="ECO:0007669"/>
    <property type="project" value="UniProtKB-UniRule"/>
</dbReference>
<dbReference type="FunFam" id="3.30.160.20:FF:000004">
    <property type="entry name" value="Peptide chain release factor 1"/>
    <property type="match status" value="1"/>
</dbReference>
<dbReference type="FunFam" id="3.30.70.1660:FF:000002">
    <property type="entry name" value="Peptide chain release factor 1"/>
    <property type="match status" value="1"/>
</dbReference>
<dbReference type="FunFam" id="3.30.70.1660:FF:000004">
    <property type="entry name" value="Peptide chain release factor 1"/>
    <property type="match status" value="1"/>
</dbReference>
<dbReference type="Gene3D" id="3.30.160.20">
    <property type="match status" value="1"/>
</dbReference>
<dbReference type="Gene3D" id="3.30.70.1660">
    <property type="match status" value="1"/>
</dbReference>
<dbReference type="Gene3D" id="6.10.140.1950">
    <property type="match status" value="1"/>
</dbReference>
<dbReference type="HAMAP" id="MF_00093">
    <property type="entry name" value="Rel_fac_1"/>
    <property type="match status" value="1"/>
</dbReference>
<dbReference type="InterPro" id="IPR005139">
    <property type="entry name" value="PCRF"/>
</dbReference>
<dbReference type="InterPro" id="IPR000352">
    <property type="entry name" value="Pep_chain_release_fac_I"/>
</dbReference>
<dbReference type="InterPro" id="IPR045853">
    <property type="entry name" value="Pep_chain_release_fac_I_sf"/>
</dbReference>
<dbReference type="InterPro" id="IPR050057">
    <property type="entry name" value="Prokaryotic/Mito_RF"/>
</dbReference>
<dbReference type="InterPro" id="IPR004373">
    <property type="entry name" value="RF-1"/>
</dbReference>
<dbReference type="NCBIfam" id="TIGR00019">
    <property type="entry name" value="prfA"/>
    <property type="match status" value="1"/>
</dbReference>
<dbReference type="NCBIfam" id="NF001859">
    <property type="entry name" value="PRK00591.1"/>
    <property type="match status" value="1"/>
</dbReference>
<dbReference type="PANTHER" id="PTHR43804">
    <property type="entry name" value="LD18447P"/>
    <property type="match status" value="1"/>
</dbReference>
<dbReference type="PANTHER" id="PTHR43804:SF7">
    <property type="entry name" value="LD18447P"/>
    <property type="match status" value="1"/>
</dbReference>
<dbReference type="Pfam" id="PF03462">
    <property type="entry name" value="PCRF"/>
    <property type="match status" value="1"/>
</dbReference>
<dbReference type="Pfam" id="PF00472">
    <property type="entry name" value="RF-1"/>
    <property type="match status" value="1"/>
</dbReference>
<dbReference type="SMART" id="SM00937">
    <property type="entry name" value="PCRF"/>
    <property type="match status" value="1"/>
</dbReference>
<dbReference type="SUPFAM" id="SSF75620">
    <property type="entry name" value="Release factor"/>
    <property type="match status" value="1"/>
</dbReference>
<dbReference type="PROSITE" id="PS00745">
    <property type="entry name" value="RF_PROK_I"/>
    <property type="match status" value="1"/>
</dbReference>